<gene>
    <name type="primary">AIM14</name>
    <name type="ORF">CD36_18260</name>
</gene>
<comment type="function">
    <text evidence="1">Probable cell surface metalloreductase. May be involved in iron or copper homeostasis (By similarity).</text>
</comment>
<comment type="subcellular location">
    <subcellularLocation>
        <location evidence="1">Membrane</location>
        <topology evidence="1">Multi-pass membrane protein</topology>
    </subcellularLocation>
</comment>
<comment type="similarity">
    <text evidence="4">Belongs to the ferric reductase (FRE) family. AIM14 subfamily.</text>
</comment>
<dbReference type="EC" id="1.16.1.-"/>
<dbReference type="EMBL" id="FM992689">
    <property type="protein sequence ID" value="CAX43604.1"/>
    <property type="molecule type" value="Genomic_DNA"/>
</dbReference>
<dbReference type="RefSeq" id="XP_002418304.1">
    <property type="nucleotide sequence ID" value="XM_002418259.1"/>
</dbReference>
<dbReference type="SMR" id="B9WB34"/>
<dbReference type="GeneID" id="8045859"/>
<dbReference type="KEGG" id="cdu:CD36_18260"/>
<dbReference type="CGD" id="CAL0000170048">
    <property type="gene designation" value="Cd36_18260"/>
</dbReference>
<dbReference type="VEuPathDB" id="FungiDB:CD36_18260"/>
<dbReference type="eggNOG" id="KOG0039">
    <property type="taxonomic scope" value="Eukaryota"/>
</dbReference>
<dbReference type="HOGENOM" id="CLU_036508_0_0_1"/>
<dbReference type="OrthoDB" id="17725at2759"/>
<dbReference type="Proteomes" id="UP000002605">
    <property type="component" value="Chromosome 2"/>
</dbReference>
<dbReference type="GO" id="GO:0005886">
    <property type="term" value="C:plasma membrane"/>
    <property type="evidence" value="ECO:0007669"/>
    <property type="project" value="TreeGrafter"/>
</dbReference>
<dbReference type="GO" id="GO:0000293">
    <property type="term" value="F:ferric-chelate reductase activity"/>
    <property type="evidence" value="ECO:0007669"/>
    <property type="project" value="TreeGrafter"/>
</dbReference>
<dbReference type="GO" id="GO:0033215">
    <property type="term" value="P:reductive iron assimilation"/>
    <property type="evidence" value="ECO:0007669"/>
    <property type="project" value="TreeGrafter"/>
</dbReference>
<dbReference type="CDD" id="cd06186">
    <property type="entry name" value="NOX_Duox_like_FAD_NADP"/>
    <property type="match status" value="1"/>
</dbReference>
<dbReference type="Gene3D" id="3.40.50.80">
    <property type="entry name" value="Nucleotide-binding domain of ferredoxin-NADP reductase (FNR) module"/>
    <property type="match status" value="1"/>
</dbReference>
<dbReference type="InterPro" id="IPR013112">
    <property type="entry name" value="FAD-bd_8"/>
</dbReference>
<dbReference type="InterPro" id="IPR013130">
    <property type="entry name" value="Fe3_Rdtase_TM_dom"/>
</dbReference>
<dbReference type="InterPro" id="IPR013121">
    <property type="entry name" value="Fe_red_NAD-bd_6"/>
</dbReference>
<dbReference type="InterPro" id="IPR039261">
    <property type="entry name" value="FNR_nucleotide-bd"/>
</dbReference>
<dbReference type="InterPro" id="IPR050369">
    <property type="entry name" value="RBOH/FRE"/>
</dbReference>
<dbReference type="PANTHER" id="PTHR11972:SF198">
    <property type="entry name" value="METALLOREDUCTASE AIM14-RELATED"/>
    <property type="match status" value="1"/>
</dbReference>
<dbReference type="PANTHER" id="PTHR11972">
    <property type="entry name" value="NADPH OXIDASE"/>
    <property type="match status" value="1"/>
</dbReference>
<dbReference type="Pfam" id="PF08022">
    <property type="entry name" value="FAD_binding_8"/>
    <property type="match status" value="1"/>
</dbReference>
<dbReference type="Pfam" id="PF01794">
    <property type="entry name" value="Ferric_reduct"/>
    <property type="match status" value="1"/>
</dbReference>
<dbReference type="Pfam" id="PF08030">
    <property type="entry name" value="NAD_binding_6"/>
    <property type="match status" value="1"/>
</dbReference>
<dbReference type="SFLD" id="SFLDF00463">
    <property type="entry name" value="AIM14"/>
    <property type="match status" value="1"/>
</dbReference>
<dbReference type="SFLD" id="SFLDS00052">
    <property type="entry name" value="Ferric_Reductase_Domain"/>
    <property type="match status" value="1"/>
</dbReference>
<dbReference type="SFLD" id="SFLDG01168">
    <property type="entry name" value="Ferric_reductase_subgroup_(FRE"/>
    <property type="match status" value="1"/>
</dbReference>
<dbReference type="SUPFAM" id="SSF52343">
    <property type="entry name" value="Ferredoxin reductase-like, C-terminal NADP-linked domain"/>
    <property type="match status" value="1"/>
</dbReference>
<reference key="1">
    <citation type="journal article" date="2009" name="Genome Res.">
        <title>Comparative genomics of the fungal pathogens Candida dubliniensis and Candida albicans.</title>
        <authorList>
            <person name="Jackson A.P."/>
            <person name="Gamble J.A."/>
            <person name="Yeomans T."/>
            <person name="Moran G.P."/>
            <person name="Saunders D."/>
            <person name="Harris D."/>
            <person name="Aslett M."/>
            <person name="Barrell J.F."/>
            <person name="Butler G."/>
            <person name="Citiulo F."/>
            <person name="Coleman D.C."/>
            <person name="de Groot P.W.J."/>
            <person name="Goodwin T.J."/>
            <person name="Quail M.A."/>
            <person name="McQuillan J."/>
            <person name="Munro C.A."/>
            <person name="Pain A."/>
            <person name="Poulter R.T."/>
            <person name="Rajandream M.A."/>
            <person name="Renauld H."/>
            <person name="Spiering M.J."/>
            <person name="Tivey A."/>
            <person name="Gow N.A.R."/>
            <person name="Barrell B."/>
            <person name="Sullivan D.J."/>
            <person name="Berriman M."/>
        </authorList>
    </citation>
    <scope>NUCLEOTIDE SEQUENCE [LARGE SCALE GENOMIC DNA]</scope>
    <source>
        <strain>CD36 / ATCC MYA-646 / CBS 7987 / NCPF 3949 / NRRL Y-17841</strain>
    </source>
</reference>
<name>AIM14_CANDC</name>
<keyword id="KW-0249">Electron transport</keyword>
<keyword id="KW-0274">FAD</keyword>
<keyword id="KW-0285">Flavoprotein</keyword>
<keyword id="KW-0406">Ion transport</keyword>
<keyword id="KW-0472">Membrane</keyword>
<keyword id="KW-0521">NADP</keyword>
<keyword id="KW-0560">Oxidoreductase</keyword>
<keyword id="KW-0812">Transmembrane</keyword>
<keyword id="KW-1133">Transmembrane helix</keyword>
<keyword id="KW-0813">Transport</keyword>
<feature type="chain" id="PRO_0000408741" description="Probable metalloreductase AIM14">
    <location>
        <begin position="1"/>
        <end position="537"/>
    </location>
</feature>
<feature type="transmembrane region" description="Helical" evidence="2">
    <location>
        <begin position="20"/>
        <end position="40"/>
    </location>
</feature>
<feature type="transmembrane region" description="Helical" evidence="2">
    <location>
        <begin position="58"/>
        <end position="78"/>
    </location>
</feature>
<feature type="transmembrane region" description="Helical" evidence="2">
    <location>
        <begin position="95"/>
        <end position="112"/>
    </location>
</feature>
<feature type="transmembrane region" description="Helical" evidence="2">
    <location>
        <begin position="133"/>
        <end position="155"/>
    </location>
</feature>
<feature type="transmembrane region" description="Helical" evidence="2">
    <location>
        <begin position="167"/>
        <end position="187"/>
    </location>
</feature>
<feature type="transmembrane region" description="Helical" evidence="2">
    <location>
        <begin position="194"/>
        <end position="216"/>
    </location>
</feature>
<feature type="transmembrane region" description="Helical" evidence="2">
    <location>
        <begin position="221"/>
        <end position="238"/>
    </location>
</feature>
<feature type="domain" description="Ferric oxidoreductase">
    <location>
        <begin position="97"/>
        <end position="213"/>
    </location>
</feature>
<feature type="domain" description="FAD-binding FR-type">
    <location>
        <begin position="187"/>
        <end position="363"/>
    </location>
</feature>
<feature type="region of interest" description="Disordered" evidence="3">
    <location>
        <begin position="432"/>
        <end position="475"/>
    </location>
</feature>
<accession>B9WB34</accession>
<sequence>MEEVVVPRHGDHHNINIKYGFFIFALTIIQTIFFLQVKFIQIKRWNSTGRFSKFWSQITNPPIWLMVTVWLLIVIFTGGHKISDFSEEYIISAKRYGRMAYCLIPLNIYLVLRPTNSPLLKPGYYLENMSLHKWTSRIIVFCSTIHAAGYVYKWIKEGAILNKPFRFLNLLGVVVFVFLVVLAIISIRPFRRKVYSTFYLIHNVTAWSMVILITFHARPGVTVFAVISLILLGYQLYLRYYSSYMVNSLKVIDIPTSTLQIIKIPQSNKFPNWLPGSHIRLNYTISKFKSWTTASHPFTVVTIPEDSTNNLTLIVRKPNSFVINPLDSYLVTGPYPSLAPPFFTTANIVNIICGGSGISLGLPIYHHFKSINSTVPVKLVWTIRNQNDTFIMNQLDMTGVQVYVTSIGDTNSEQQENQQQAVPLFVIEEEEEEQGHGLLNNDNENGIELQNMPKTNEESSEANSTNSKNNKDNQERKEYFKFGRPKFDEVFAIDDPTTTYDLDNSWVIACGPDELISDAKRWSKDRGYRFYYEKYEM</sequence>
<organism>
    <name type="scientific">Candida dubliniensis (strain CD36 / ATCC MYA-646 / CBS 7987 / NCPF 3949 / NRRL Y-17841)</name>
    <name type="common">Yeast</name>
    <dbReference type="NCBI Taxonomy" id="573826"/>
    <lineage>
        <taxon>Eukaryota</taxon>
        <taxon>Fungi</taxon>
        <taxon>Dikarya</taxon>
        <taxon>Ascomycota</taxon>
        <taxon>Saccharomycotina</taxon>
        <taxon>Pichiomycetes</taxon>
        <taxon>Debaryomycetaceae</taxon>
        <taxon>Candida/Lodderomyces clade</taxon>
        <taxon>Candida</taxon>
    </lineage>
</organism>
<protein>
    <recommendedName>
        <fullName>Probable metalloreductase AIM14</fullName>
        <ecNumber>1.16.1.-</ecNumber>
    </recommendedName>
</protein>
<evidence type="ECO:0000250" key="1"/>
<evidence type="ECO:0000255" key="2"/>
<evidence type="ECO:0000256" key="3">
    <source>
        <dbReference type="SAM" id="MobiDB-lite"/>
    </source>
</evidence>
<evidence type="ECO:0000305" key="4"/>
<proteinExistence type="inferred from homology"/>